<sequence>MSTIPFSPKQKPDESTLTDRQRKVLDAIRTHIDEQGFAPSFREIGNAAGLKSPSSVKHQLQVLEDKGFIRMNANKGRAIEVVAGSAPNAEKPSQASEEATSTSNVAEIYQFPAEAIAESHDVPLVGRIAAGVPITAEQHVDDVMRLPERLTGSGTLFMLEVHGDSMVDAAICDGDYVVVREQNSAVNGDIVAALLDDEATVKTFRKENGHVWLMPHNPAYSPIDGTHATIMGKVVTVLRKL</sequence>
<evidence type="ECO:0000255" key="1">
    <source>
        <dbReference type="HAMAP-Rule" id="MF_00015"/>
    </source>
</evidence>
<protein>
    <recommendedName>
        <fullName evidence="1">LexA repressor</fullName>
        <ecNumber evidence="1">3.4.21.88</ecNumber>
    </recommendedName>
</protein>
<proteinExistence type="inferred from homology"/>
<comment type="function">
    <text evidence="1">Represses a number of genes involved in the response to DNA damage (SOS response), including recA and lexA. In the presence of single-stranded DNA, RecA interacts with LexA causing an autocatalytic cleavage which disrupts the DNA-binding part of LexA, leading to derepression of the SOS regulon and eventually DNA repair.</text>
</comment>
<comment type="catalytic activity">
    <reaction evidence="1">
        <text>Hydrolysis of Ala-|-Gly bond in repressor LexA.</text>
        <dbReference type="EC" id="3.4.21.88"/>
    </reaction>
</comment>
<comment type="subunit">
    <text evidence="1">Homodimer.</text>
</comment>
<comment type="similarity">
    <text evidence="1">Belongs to the peptidase S24 family.</text>
</comment>
<gene>
    <name evidence="1" type="primary">lexA</name>
    <name type="ordered locus">BLD_0167</name>
</gene>
<keyword id="KW-0068">Autocatalytic cleavage</keyword>
<keyword id="KW-0227">DNA damage</keyword>
<keyword id="KW-0234">DNA repair</keyword>
<keyword id="KW-0235">DNA replication</keyword>
<keyword id="KW-0238">DNA-binding</keyword>
<keyword id="KW-0378">Hydrolase</keyword>
<keyword id="KW-0678">Repressor</keyword>
<keyword id="KW-0742">SOS response</keyword>
<keyword id="KW-0804">Transcription</keyword>
<keyword id="KW-0805">Transcription regulation</keyword>
<name>LEXA_BIFLD</name>
<dbReference type="EC" id="3.4.21.88" evidence="1"/>
<dbReference type="EMBL" id="CP000605">
    <property type="protein sequence ID" value="ACD97613.1"/>
    <property type="molecule type" value="Genomic_DNA"/>
</dbReference>
<dbReference type="RefSeq" id="WP_007052535.1">
    <property type="nucleotide sequence ID" value="NZ_AABM02000003.1"/>
</dbReference>
<dbReference type="SMR" id="B3DQB4"/>
<dbReference type="MEROPS" id="S24.001"/>
<dbReference type="GeneID" id="69578507"/>
<dbReference type="KEGG" id="blj:BLD_0167"/>
<dbReference type="HOGENOM" id="CLU_066192_45_0_11"/>
<dbReference type="Proteomes" id="UP000002419">
    <property type="component" value="Chromosome"/>
</dbReference>
<dbReference type="GO" id="GO:0003677">
    <property type="term" value="F:DNA binding"/>
    <property type="evidence" value="ECO:0007669"/>
    <property type="project" value="UniProtKB-UniRule"/>
</dbReference>
<dbReference type="GO" id="GO:0004252">
    <property type="term" value="F:serine-type endopeptidase activity"/>
    <property type="evidence" value="ECO:0007669"/>
    <property type="project" value="UniProtKB-UniRule"/>
</dbReference>
<dbReference type="GO" id="GO:0006281">
    <property type="term" value="P:DNA repair"/>
    <property type="evidence" value="ECO:0007669"/>
    <property type="project" value="UniProtKB-UniRule"/>
</dbReference>
<dbReference type="GO" id="GO:0006260">
    <property type="term" value="P:DNA replication"/>
    <property type="evidence" value="ECO:0007669"/>
    <property type="project" value="UniProtKB-UniRule"/>
</dbReference>
<dbReference type="GO" id="GO:0045892">
    <property type="term" value="P:negative regulation of DNA-templated transcription"/>
    <property type="evidence" value="ECO:0007669"/>
    <property type="project" value="UniProtKB-UniRule"/>
</dbReference>
<dbReference type="GO" id="GO:0006508">
    <property type="term" value="P:proteolysis"/>
    <property type="evidence" value="ECO:0007669"/>
    <property type="project" value="InterPro"/>
</dbReference>
<dbReference type="GO" id="GO:0009432">
    <property type="term" value="P:SOS response"/>
    <property type="evidence" value="ECO:0007669"/>
    <property type="project" value="UniProtKB-UniRule"/>
</dbReference>
<dbReference type="CDD" id="cd06529">
    <property type="entry name" value="S24_LexA-like"/>
    <property type="match status" value="1"/>
</dbReference>
<dbReference type="FunFam" id="1.10.10.10:FF:000009">
    <property type="entry name" value="LexA repressor"/>
    <property type="match status" value="1"/>
</dbReference>
<dbReference type="FunFam" id="2.10.109.10:FF:000001">
    <property type="entry name" value="LexA repressor"/>
    <property type="match status" value="1"/>
</dbReference>
<dbReference type="Gene3D" id="2.10.109.10">
    <property type="entry name" value="Umud Fragment, subunit A"/>
    <property type="match status" value="1"/>
</dbReference>
<dbReference type="Gene3D" id="1.10.10.10">
    <property type="entry name" value="Winged helix-like DNA-binding domain superfamily/Winged helix DNA-binding domain"/>
    <property type="match status" value="1"/>
</dbReference>
<dbReference type="HAMAP" id="MF_00015">
    <property type="entry name" value="LexA"/>
    <property type="match status" value="1"/>
</dbReference>
<dbReference type="InterPro" id="IPR006200">
    <property type="entry name" value="LexA"/>
</dbReference>
<dbReference type="InterPro" id="IPR039418">
    <property type="entry name" value="LexA-like"/>
</dbReference>
<dbReference type="InterPro" id="IPR036286">
    <property type="entry name" value="LexA/Signal_pep-like_sf"/>
</dbReference>
<dbReference type="InterPro" id="IPR006199">
    <property type="entry name" value="LexA_DNA-bd_dom"/>
</dbReference>
<dbReference type="InterPro" id="IPR050077">
    <property type="entry name" value="LexA_repressor"/>
</dbReference>
<dbReference type="InterPro" id="IPR006197">
    <property type="entry name" value="Peptidase_S24_LexA"/>
</dbReference>
<dbReference type="InterPro" id="IPR015927">
    <property type="entry name" value="Peptidase_S24_S26A/B/C"/>
</dbReference>
<dbReference type="InterPro" id="IPR036388">
    <property type="entry name" value="WH-like_DNA-bd_sf"/>
</dbReference>
<dbReference type="InterPro" id="IPR036390">
    <property type="entry name" value="WH_DNA-bd_sf"/>
</dbReference>
<dbReference type="NCBIfam" id="TIGR00498">
    <property type="entry name" value="lexA"/>
    <property type="match status" value="1"/>
</dbReference>
<dbReference type="PANTHER" id="PTHR33516">
    <property type="entry name" value="LEXA REPRESSOR"/>
    <property type="match status" value="1"/>
</dbReference>
<dbReference type="PANTHER" id="PTHR33516:SF2">
    <property type="entry name" value="LEXA REPRESSOR-RELATED"/>
    <property type="match status" value="1"/>
</dbReference>
<dbReference type="Pfam" id="PF01726">
    <property type="entry name" value="LexA_DNA_bind"/>
    <property type="match status" value="1"/>
</dbReference>
<dbReference type="Pfam" id="PF00717">
    <property type="entry name" value="Peptidase_S24"/>
    <property type="match status" value="1"/>
</dbReference>
<dbReference type="PRINTS" id="PR00726">
    <property type="entry name" value="LEXASERPTASE"/>
</dbReference>
<dbReference type="SUPFAM" id="SSF51306">
    <property type="entry name" value="LexA/Signal peptidase"/>
    <property type="match status" value="1"/>
</dbReference>
<dbReference type="SUPFAM" id="SSF46785">
    <property type="entry name" value="Winged helix' DNA-binding domain"/>
    <property type="match status" value="1"/>
</dbReference>
<reference key="1">
    <citation type="journal article" date="2008" name="BMC Genomics">
        <title>Comparative genomic analysis of the gut bacterium Bifidobacterium longum reveals loci susceptible to deletion during pure culture growth.</title>
        <authorList>
            <person name="Lee J.H."/>
            <person name="Karamychev V.N."/>
            <person name="Kozyavkin S.A."/>
            <person name="Mills D."/>
            <person name="Pavlov A.R."/>
            <person name="Pavlova N.V."/>
            <person name="Polouchine N.N."/>
            <person name="Richardson P.M."/>
            <person name="Shakhova V.V."/>
            <person name="Slesarev A.I."/>
            <person name="Weimer B."/>
            <person name="O'Sullivan D.J."/>
        </authorList>
    </citation>
    <scope>NUCLEOTIDE SEQUENCE [LARGE SCALE GENOMIC DNA]</scope>
    <source>
        <strain>DJO10A</strain>
    </source>
</reference>
<feature type="chain" id="PRO_1000089547" description="LexA repressor">
    <location>
        <begin position="1"/>
        <end position="241"/>
    </location>
</feature>
<feature type="DNA-binding region" description="H-T-H motif" evidence="1">
    <location>
        <begin position="41"/>
        <end position="61"/>
    </location>
</feature>
<feature type="active site" description="For autocatalytic cleavage activity" evidence="1">
    <location>
        <position position="165"/>
    </location>
</feature>
<feature type="active site" description="For autocatalytic cleavage activity" evidence="1">
    <location>
        <position position="202"/>
    </location>
</feature>
<feature type="site" description="Cleavage; by autolysis" evidence="1">
    <location>
        <begin position="130"/>
        <end position="131"/>
    </location>
</feature>
<accession>B3DQB4</accession>
<organism>
    <name type="scientific">Bifidobacterium longum (strain DJO10A)</name>
    <dbReference type="NCBI Taxonomy" id="205913"/>
    <lineage>
        <taxon>Bacteria</taxon>
        <taxon>Bacillati</taxon>
        <taxon>Actinomycetota</taxon>
        <taxon>Actinomycetes</taxon>
        <taxon>Bifidobacteriales</taxon>
        <taxon>Bifidobacteriaceae</taxon>
        <taxon>Bifidobacterium</taxon>
    </lineage>
</organism>